<proteinExistence type="inferred from homology"/>
<dbReference type="EC" id="2.7.7.4" evidence="1"/>
<dbReference type="EMBL" id="CP000668">
    <property type="protein sequence ID" value="ABP41354.1"/>
    <property type="molecule type" value="Genomic_DNA"/>
</dbReference>
<dbReference type="RefSeq" id="WP_002209386.1">
    <property type="nucleotide sequence ID" value="NZ_CP009715.1"/>
</dbReference>
<dbReference type="SMR" id="A4TPZ2"/>
<dbReference type="GeneID" id="57975343"/>
<dbReference type="KEGG" id="ypp:YPDSF_2994"/>
<dbReference type="PATRIC" id="fig|386656.14.peg.1369"/>
<dbReference type="UniPathway" id="UPA00140">
    <property type="reaction ID" value="UER00204"/>
</dbReference>
<dbReference type="GO" id="GO:0005524">
    <property type="term" value="F:ATP binding"/>
    <property type="evidence" value="ECO:0007669"/>
    <property type="project" value="UniProtKB-KW"/>
</dbReference>
<dbReference type="GO" id="GO:0004781">
    <property type="term" value="F:sulfate adenylyltransferase (ATP) activity"/>
    <property type="evidence" value="ECO:0007669"/>
    <property type="project" value="UniProtKB-UniRule"/>
</dbReference>
<dbReference type="GO" id="GO:0070814">
    <property type="term" value="P:hydrogen sulfide biosynthetic process"/>
    <property type="evidence" value="ECO:0007669"/>
    <property type="project" value="UniProtKB-UniRule"/>
</dbReference>
<dbReference type="GO" id="GO:0000103">
    <property type="term" value="P:sulfate assimilation"/>
    <property type="evidence" value="ECO:0007669"/>
    <property type="project" value="UniProtKB-UniRule"/>
</dbReference>
<dbReference type="CDD" id="cd23946">
    <property type="entry name" value="Sulfate_adenylyltransferase_2"/>
    <property type="match status" value="1"/>
</dbReference>
<dbReference type="FunFam" id="3.40.50.620:FF:000002">
    <property type="entry name" value="Sulfate adenylyltransferase subunit 2"/>
    <property type="match status" value="1"/>
</dbReference>
<dbReference type="Gene3D" id="3.40.50.620">
    <property type="entry name" value="HUPs"/>
    <property type="match status" value="1"/>
</dbReference>
<dbReference type="HAMAP" id="MF_00064">
    <property type="entry name" value="Sulf_adenylyltr_sub2"/>
    <property type="match status" value="1"/>
</dbReference>
<dbReference type="InterPro" id="IPR002500">
    <property type="entry name" value="PAPS_reduct_dom"/>
</dbReference>
<dbReference type="InterPro" id="IPR014729">
    <property type="entry name" value="Rossmann-like_a/b/a_fold"/>
</dbReference>
<dbReference type="InterPro" id="IPR011784">
    <property type="entry name" value="SO4_adenylTrfase_ssu"/>
</dbReference>
<dbReference type="InterPro" id="IPR050128">
    <property type="entry name" value="Sulfate_adenylyltrnsfr_sub2"/>
</dbReference>
<dbReference type="NCBIfam" id="TIGR02039">
    <property type="entry name" value="CysD"/>
    <property type="match status" value="1"/>
</dbReference>
<dbReference type="NCBIfam" id="NF003587">
    <property type="entry name" value="PRK05253.1"/>
    <property type="match status" value="1"/>
</dbReference>
<dbReference type="NCBIfam" id="NF009214">
    <property type="entry name" value="PRK12563.1"/>
    <property type="match status" value="1"/>
</dbReference>
<dbReference type="PANTHER" id="PTHR43196">
    <property type="entry name" value="SULFATE ADENYLYLTRANSFERASE SUBUNIT 2"/>
    <property type="match status" value="1"/>
</dbReference>
<dbReference type="PANTHER" id="PTHR43196:SF1">
    <property type="entry name" value="SULFATE ADENYLYLTRANSFERASE SUBUNIT 2"/>
    <property type="match status" value="1"/>
</dbReference>
<dbReference type="Pfam" id="PF01507">
    <property type="entry name" value="PAPS_reduct"/>
    <property type="match status" value="1"/>
</dbReference>
<dbReference type="PIRSF" id="PIRSF002936">
    <property type="entry name" value="CysDAde_trans"/>
    <property type="match status" value="1"/>
</dbReference>
<dbReference type="SUPFAM" id="SSF52402">
    <property type="entry name" value="Adenine nucleotide alpha hydrolases-like"/>
    <property type="match status" value="1"/>
</dbReference>
<keyword id="KW-0067">ATP-binding</keyword>
<keyword id="KW-0547">Nucleotide-binding</keyword>
<keyword id="KW-0548">Nucleotidyltransferase</keyword>
<keyword id="KW-0808">Transferase</keyword>
<sequence>MDEKRLTHLRQLEAESIHIIREVAAEFGNPVMLYSIGKDSSVMLHLARKAFFPGHLPFPLLHVDTGWKFREMYEFRDHTVKEFGCELLVHRNPEGVAMGINPFVHGSAKHTDIMKTEGLKQALNKYGFDAAFGGARRDEEKSRAKERIYSFRDRFHRWDPKNQRPELWHNYNGQINKGESIRVFPLSNWTELDIWQYIFLEKIEIVPLYLAKPRPVVERDGMLLMVDDDRIDLQPGEVIVQKKVRFRTLGCWPLTGAVESEAETLPAIIEEMLISTTSERQGRMIDRDQSGSMELKKRQGYF</sequence>
<feature type="chain" id="PRO_1000009003" description="Sulfate adenylyltransferase subunit 2">
    <location>
        <begin position="1"/>
        <end position="302"/>
    </location>
</feature>
<accession>A4TPZ2</accession>
<name>CYSD_YERPP</name>
<comment type="function">
    <text evidence="1">With CysN forms the ATP sulfurylase (ATPS) that catalyzes the adenylation of sulfate producing adenosine 5'-phosphosulfate (APS) and diphosphate, the first enzymatic step in sulfur assimilation pathway. APS synthesis involves the formation of a high-energy phosphoric-sulfuric acid anhydride bond driven by GTP hydrolysis by CysN coupled to ATP hydrolysis by CysD.</text>
</comment>
<comment type="catalytic activity">
    <reaction evidence="1">
        <text>sulfate + ATP + H(+) = adenosine 5'-phosphosulfate + diphosphate</text>
        <dbReference type="Rhea" id="RHEA:18133"/>
        <dbReference type="ChEBI" id="CHEBI:15378"/>
        <dbReference type="ChEBI" id="CHEBI:16189"/>
        <dbReference type="ChEBI" id="CHEBI:30616"/>
        <dbReference type="ChEBI" id="CHEBI:33019"/>
        <dbReference type="ChEBI" id="CHEBI:58243"/>
        <dbReference type="EC" id="2.7.7.4"/>
    </reaction>
</comment>
<comment type="pathway">
    <text evidence="1">Sulfur metabolism; hydrogen sulfide biosynthesis; sulfite from sulfate: step 1/3.</text>
</comment>
<comment type="subunit">
    <text evidence="1">Heterodimer composed of CysD, the smaller subunit, and CysN.</text>
</comment>
<comment type="similarity">
    <text evidence="1">Belongs to the PAPS reductase family. CysD subfamily.</text>
</comment>
<evidence type="ECO:0000255" key="1">
    <source>
        <dbReference type="HAMAP-Rule" id="MF_00064"/>
    </source>
</evidence>
<protein>
    <recommendedName>
        <fullName evidence="1">Sulfate adenylyltransferase subunit 2</fullName>
        <ecNumber evidence="1">2.7.7.4</ecNumber>
    </recommendedName>
    <alternativeName>
        <fullName evidence="1">ATP-sulfurylase small subunit</fullName>
    </alternativeName>
    <alternativeName>
        <fullName evidence="1">Sulfate adenylate transferase</fullName>
        <shortName evidence="1">SAT</shortName>
    </alternativeName>
</protein>
<organism>
    <name type="scientific">Yersinia pestis (strain Pestoides F)</name>
    <dbReference type="NCBI Taxonomy" id="386656"/>
    <lineage>
        <taxon>Bacteria</taxon>
        <taxon>Pseudomonadati</taxon>
        <taxon>Pseudomonadota</taxon>
        <taxon>Gammaproteobacteria</taxon>
        <taxon>Enterobacterales</taxon>
        <taxon>Yersiniaceae</taxon>
        <taxon>Yersinia</taxon>
    </lineage>
</organism>
<gene>
    <name evidence="1" type="primary">cysD</name>
    <name type="ordered locus">YPDSF_2994</name>
</gene>
<reference key="1">
    <citation type="submission" date="2007-02" db="EMBL/GenBank/DDBJ databases">
        <title>Complete sequence of chromosome of Yersinia pestis Pestoides F.</title>
        <authorList>
            <consortium name="US DOE Joint Genome Institute"/>
            <person name="Copeland A."/>
            <person name="Lucas S."/>
            <person name="Lapidus A."/>
            <person name="Barry K."/>
            <person name="Detter J.C."/>
            <person name="Glavina del Rio T."/>
            <person name="Hammon N."/>
            <person name="Israni S."/>
            <person name="Dalin E."/>
            <person name="Tice H."/>
            <person name="Pitluck S."/>
            <person name="Di Bartolo G."/>
            <person name="Chain P."/>
            <person name="Malfatti S."/>
            <person name="Shin M."/>
            <person name="Vergez L."/>
            <person name="Schmutz J."/>
            <person name="Larimer F."/>
            <person name="Land M."/>
            <person name="Hauser L."/>
            <person name="Worsham P."/>
            <person name="Chu M."/>
            <person name="Bearden S."/>
            <person name="Garcia E."/>
            <person name="Richardson P."/>
        </authorList>
    </citation>
    <scope>NUCLEOTIDE SEQUENCE [LARGE SCALE GENOMIC DNA]</scope>
    <source>
        <strain>Pestoides F</strain>
    </source>
</reference>